<protein>
    <recommendedName>
        <fullName evidence="1">Large ribosomal subunit protein uL15</fullName>
    </recommendedName>
    <alternativeName>
        <fullName evidence="3">50S ribosomal protein L15</fullName>
    </alternativeName>
</protein>
<sequence length="150" mass="16501">MELHQLKSVSKSRNHKSKVVGRGHGSGLGKTSSRGQKGQKARKSGLTRLGFEGGQTPLYRRLPKYGVANKGILKKRWVVLNLNKVAKLNLKTVTRATLIEKKVISKKNNLPLKLIGNTKLTTPIHFEVQKISKNALNAVQTSKGSVKIIT</sequence>
<evidence type="ECO:0000255" key="1">
    <source>
        <dbReference type="HAMAP-Rule" id="MF_01341"/>
    </source>
</evidence>
<evidence type="ECO:0000256" key="2">
    <source>
        <dbReference type="SAM" id="MobiDB-lite"/>
    </source>
</evidence>
<evidence type="ECO:0000305" key="3"/>
<name>RL15_MYCGE</name>
<gene>
    <name evidence="1" type="primary">rplO</name>
    <name type="synonym">rpl15</name>
    <name type="ordered locus">MG169</name>
</gene>
<reference key="1">
    <citation type="journal article" date="1995" name="Science">
        <title>The minimal gene complement of Mycoplasma genitalium.</title>
        <authorList>
            <person name="Fraser C.M."/>
            <person name="Gocayne J.D."/>
            <person name="White O."/>
            <person name="Adams M.D."/>
            <person name="Clayton R.A."/>
            <person name="Fleischmann R.D."/>
            <person name="Bult C.J."/>
            <person name="Kerlavage A.R."/>
            <person name="Sutton G.G."/>
            <person name="Kelley J.M."/>
            <person name="Fritchman J.L."/>
            <person name="Weidman J.F."/>
            <person name="Small K.V."/>
            <person name="Sandusky M."/>
            <person name="Fuhrmann J.L."/>
            <person name="Nguyen D.T."/>
            <person name="Utterback T.R."/>
            <person name="Saudek D.M."/>
            <person name="Phillips C.A."/>
            <person name="Merrick J.M."/>
            <person name="Tomb J.-F."/>
            <person name="Dougherty B.A."/>
            <person name="Bott K.F."/>
            <person name="Hu P.-C."/>
            <person name="Lucier T.S."/>
            <person name="Peterson S.N."/>
            <person name="Smith H.O."/>
            <person name="Hutchison C.A. III"/>
            <person name="Venter J.C."/>
        </authorList>
    </citation>
    <scope>NUCLEOTIDE SEQUENCE [LARGE SCALE GENOMIC DNA]</scope>
    <source>
        <strain>ATCC 33530 / DSM 19775 / NCTC 10195 / G37</strain>
    </source>
</reference>
<feature type="chain" id="PRO_0000104758" description="Large ribosomal subunit protein uL15">
    <location>
        <begin position="1"/>
        <end position="150"/>
    </location>
</feature>
<feature type="region of interest" description="Disordered" evidence="2">
    <location>
        <begin position="1"/>
        <end position="49"/>
    </location>
</feature>
<feature type="compositionally biased region" description="Basic residues" evidence="2">
    <location>
        <begin position="10"/>
        <end position="21"/>
    </location>
</feature>
<keyword id="KW-1185">Reference proteome</keyword>
<keyword id="KW-0687">Ribonucleoprotein</keyword>
<keyword id="KW-0689">Ribosomal protein</keyword>
<keyword id="KW-0694">RNA-binding</keyword>
<keyword id="KW-0699">rRNA-binding</keyword>
<accession>P47415</accession>
<comment type="function">
    <text evidence="1">Binds to the 23S rRNA.</text>
</comment>
<comment type="subunit">
    <text evidence="1">Part of the 50S ribosomal subunit.</text>
</comment>
<comment type="similarity">
    <text evidence="1">Belongs to the universal ribosomal protein uL15 family.</text>
</comment>
<organism>
    <name type="scientific">Mycoplasma genitalium (strain ATCC 33530 / DSM 19775 / NCTC 10195 / G37)</name>
    <name type="common">Mycoplasmoides genitalium</name>
    <dbReference type="NCBI Taxonomy" id="243273"/>
    <lineage>
        <taxon>Bacteria</taxon>
        <taxon>Bacillati</taxon>
        <taxon>Mycoplasmatota</taxon>
        <taxon>Mycoplasmoidales</taxon>
        <taxon>Mycoplasmoidaceae</taxon>
        <taxon>Mycoplasmoides</taxon>
    </lineage>
</organism>
<proteinExistence type="inferred from homology"/>
<dbReference type="EMBL" id="L43967">
    <property type="protein sequence ID" value="AAC71387.1"/>
    <property type="molecule type" value="Genomic_DNA"/>
</dbReference>
<dbReference type="PIR" id="G64218">
    <property type="entry name" value="G64218"/>
</dbReference>
<dbReference type="RefSeq" id="WP_010869361.1">
    <property type="nucleotide sequence ID" value="NC_000908.2"/>
</dbReference>
<dbReference type="SMR" id="P47415"/>
<dbReference type="FunCoup" id="P47415">
    <property type="interactions" value="215"/>
</dbReference>
<dbReference type="STRING" id="243273.MG_169"/>
<dbReference type="GeneID" id="88282302"/>
<dbReference type="KEGG" id="mge:MG_169"/>
<dbReference type="eggNOG" id="COG0200">
    <property type="taxonomic scope" value="Bacteria"/>
</dbReference>
<dbReference type="HOGENOM" id="CLU_055188_4_2_14"/>
<dbReference type="InParanoid" id="P47415"/>
<dbReference type="OrthoDB" id="9810293at2"/>
<dbReference type="BioCyc" id="MGEN243273:G1GJ2-193-MONOMER"/>
<dbReference type="Proteomes" id="UP000000807">
    <property type="component" value="Chromosome"/>
</dbReference>
<dbReference type="GO" id="GO:0022625">
    <property type="term" value="C:cytosolic large ribosomal subunit"/>
    <property type="evidence" value="ECO:0000318"/>
    <property type="project" value="GO_Central"/>
</dbReference>
<dbReference type="GO" id="GO:0019843">
    <property type="term" value="F:rRNA binding"/>
    <property type="evidence" value="ECO:0007669"/>
    <property type="project" value="UniProtKB-UniRule"/>
</dbReference>
<dbReference type="GO" id="GO:0003735">
    <property type="term" value="F:structural constituent of ribosome"/>
    <property type="evidence" value="ECO:0000318"/>
    <property type="project" value="GO_Central"/>
</dbReference>
<dbReference type="GO" id="GO:0006412">
    <property type="term" value="P:translation"/>
    <property type="evidence" value="ECO:0007669"/>
    <property type="project" value="UniProtKB-UniRule"/>
</dbReference>
<dbReference type="Gene3D" id="3.100.10.10">
    <property type="match status" value="1"/>
</dbReference>
<dbReference type="HAMAP" id="MF_01341">
    <property type="entry name" value="Ribosomal_uL15"/>
    <property type="match status" value="1"/>
</dbReference>
<dbReference type="InterPro" id="IPR030878">
    <property type="entry name" value="Ribosomal_uL15"/>
</dbReference>
<dbReference type="InterPro" id="IPR021131">
    <property type="entry name" value="Ribosomal_uL15/eL18"/>
</dbReference>
<dbReference type="InterPro" id="IPR036227">
    <property type="entry name" value="Ribosomal_uL15/eL18_sf"/>
</dbReference>
<dbReference type="InterPro" id="IPR005749">
    <property type="entry name" value="Ribosomal_uL15_bac-type"/>
</dbReference>
<dbReference type="NCBIfam" id="TIGR01071">
    <property type="entry name" value="rplO_bact"/>
    <property type="match status" value="1"/>
</dbReference>
<dbReference type="PANTHER" id="PTHR12934">
    <property type="entry name" value="50S RIBOSOMAL PROTEIN L15"/>
    <property type="match status" value="1"/>
</dbReference>
<dbReference type="PANTHER" id="PTHR12934:SF11">
    <property type="entry name" value="LARGE RIBOSOMAL SUBUNIT PROTEIN UL15M"/>
    <property type="match status" value="1"/>
</dbReference>
<dbReference type="Pfam" id="PF00828">
    <property type="entry name" value="Ribosomal_L27A"/>
    <property type="match status" value="1"/>
</dbReference>
<dbReference type="SUPFAM" id="SSF52080">
    <property type="entry name" value="Ribosomal proteins L15p and L18e"/>
    <property type="match status" value="1"/>
</dbReference>